<evidence type="ECO:0000255" key="1">
    <source>
        <dbReference type="HAMAP-Rule" id="MF_01037"/>
    </source>
</evidence>
<feature type="chain" id="PRO_0000346351" description="Methylenetetrahydrofolate--tRNA-(uracil-5-)-methyltransferase TrmFO">
    <location>
        <begin position="1"/>
        <end position="439"/>
    </location>
</feature>
<feature type="binding site" evidence="1">
    <location>
        <begin position="8"/>
        <end position="13"/>
    </location>
    <ligand>
        <name>FAD</name>
        <dbReference type="ChEBI" id="CHEBI:57692"/>
    </ligand>
</feature>
<organism>
    <name type="scientific">Magnetococcus marinus (strain ATCC BAA-1437 / JCM 17883 / MC-1)</name>
    <dbReference type="NCBI Taxonomy" id="156889"/>
    <lineage>
        <taxon>Bacteria</taxon>
        <taxon>Pseudomonadati</taxon>
        <taxon>Pseudomonadota</taxon>
        <taxon>Alphaproteobacteria</taxon>
        <taxon>Magnetococcales</taxon>
        <taxon>Magnetococcaceae</taxon>
        <taxon>Magnetococcus</taxon>
    </lineage>
</organism>
<sequence length="439" mass="48668">MAKITIIGAGLAGSEAAWQLAQRNIPVRLYEMRPHTMTPAHQTDHCGELVCSNSLRSDDHSNSAVGLLHQELRGLDSLIMRCADQHRVPAGGALAVDRHAFSAAITEALEQHPLIELIRQEIVTPPMEEDGYTIIASGPLTAGGLAHWIEAQVGKRMAFFDAIAPIVSHDSIDFSKAWKQSRYDKGDGNDYINCAMDEAQYHTFVQALLEGEKVAYKEFEANTPYFDGCLPIEVMAERGVETLRYGPMKPVGLTNPHKAEKSYAIVQLRQDNKLGTLWNMVGFQTKLSWPAQKRIFATIPGLEQAEFVRLGALHRNTFINSPTLLSETLQLKTQPRLLFAGQITGVEGYVESTACGLMAGRIVAHKMRGEAVSIPPQTTALGALMRHITGEADATHFQPMNVNFGLFPNFTERVPKKQRKEAYAQRALTHMQQWLQENS</sequence>
<reference key="1">
    <citation type="journal article" date="2009" name="Appl. Environ. Microbiol.">
        <title>Complete genome sequence of the chemolithoautotrophic marine magnetotactic coccus strain MC-1.</title>
        <authorList>
            <person name="Schubbe S."/>
            <person name="Williams T.J."/>
            <person name="Xie G."/>
            <person name="Kiss H.E."/>
            <person name="Brettin T.S."/>
            <person name="Martinez D."/>
            <person name="Ross C.A."/>
            <person name="Schuler D."/>
            <person name="Cox B.L."/>
            <person name="Nealson K.H."/>
            <person name="Bazylinski D.A."/>
        </authorList>
    </citation>
    <scope>NUCLEOTIDE SEQUENCE [LARGE SCALE GENOMIC DNA]</scope>
    <source>
        <strain>ATCC BAA-1437 / JCM 17883 / MC-1</strain>
    </source>
</reference>
<name>TRMFO_MAGMM</name>
<accession>A0LDC6</accession>
<keyword id="KW-0963">Cytoplasm</keyword>
<keyword id="KW-0274">FAD</keyword>
<keyword id="KW-0285">Flavoprotein</keyword>
<keyword id="KW-0489">Methyltransferase</keyword>
<keyword id="KW-0520">NAD</keyword>
<keyword id="KW-0521">NADP</keyword>
<keyword id="KW-1185">Reference proteome</keyword>
<keyword id="KW-0808">Transferase</keyword>
<keyword id="KW-0819">tRNA processing</keyword>
<dbReference type="EC" id="2.1.1.74" evidence="1"/>
<dbReference type="EMBL" id="CP000471">
    <property type="protein sequence ID" value="ABK45969.1"/>
    <property type="molecule type" value="Genomic_DNA"/>
</dbReference>
<dbReference type="RefSeq" id="WP_011715025.1">
    <property type="nucleotide sequence ID" value="NC_008576.1"/>
</dbReference>
<dbReference type="SMR" id="A0LDC6"/>
<dbReference type="STRING" id="156889.Mmc1_3484"/>
<dbReference type="KEGG" id="mgm:Mmc1_3484"/>
<dbReference type="eggNOG" id="COG1206">
    <property type="taxonomic scope" value="Bacteria"/>
</dbReference>
<dbReference type="HOGENOM" id="CLU_033057_1_0_5"/>
<dbReference type="OrthoDB" id="9803114at2"/>
<dbReference type="Proteomes" id="UP000002586">
    <property type="component" value="Chromosome"/>
</dbReference>
<dbReference type="GO" id="GO:0005829">
    <property type="term" value="C:cytosol"/>
    <property type="evidence" value="ECO:0007669"/>
    <property type="project" value="TreeGrafter"/>
</dbReference>
<dbReference type="GO" id="GO:0050660">
    <property type="term" value="F:flavin adenine dinucleotide binding"/>
    <property type="evidence" value="ECO:0007669"/>
    <property type="project" value="UniProtKB-UniRule"/>
</dbReference>
<dbReference type="GO" id="GO:0047151">
    <property type="term" value="F:tRNA (uracil(54)-C5)-methyltransferase activity, 5,10-methylenetetrahydrofolate-dependent"/>
    <property type="evidence" value="ECO:0007669"/>
    <property type="project" value="UniProtKB-UniRule"/>
</dbReference>
<dbReference type="GO" id="GO:0030488">
    <property type="term" value="P:tRNA methylation"/>
    <property type="evidence" value="ECO:0007669"/>
    <property type="project" value="TreeGrafter"/>
</dbReference>
<dbReference type="GO" id="GO:0002098">
    <property type="term" value="P:tRNA wobble uridine modification"/>
    <property type="evidence" value="ECO:0007669"/>
    <property type="project" value="TreeGrafter"/>
</dbReference>
<dbReference type="Gene3D" id="3.50.50.60">
    <property type="entry name" value="FAD/NAD(P)-binding domain"/>
    <property type="match status" value="2"/>
</dbReference>
<dbReference type="HAMAP" id="MF_01037">
    <property type="entry name" value="TrmFO"/>
    <property type="match status" value="1"/>
</dbReference>
<dbReference type="InterPro" id="IPR036188">
    <property type="entry name" value="FAD/NAD-bd_sf"/>
</dbReference>
<dbReference type="InterPro" id="IPR002218">
    <property type="entry name" value="MnmG-rel"/>
</dbReference>
<dbReference type="InterPro" id="IPR040131">
    <property type="entry name" value="MnmG_N"/>
</dbReference>
<dbReference type="InterPro" id="IPR004417">
    <property type="entry name" value="TrmFO"/>
</dbReference>
<dbReference type="NCBIfam" id="TIGR00137">
    <property type="entry name" value="gid_trmFO"/>
    <property type="match status" value="1"/>
</dbReference>
<dbReference type="NCBIfam" id="NF003739">
    <property type="entry name" value="PRK05335.1"/>
    <property type="match status" value="1"/>
</dbReference>
<dbReference type="PANTHER" id="PTHR11806">
    <property type="entry name" value="GLUCOSE INHIBITED DIVISION PROTEIN A"/>
    <property type="match status" value="1"/>
</dbReference>
<dbReference type="PANTHER" id="PTHR11806:SF2">
    <property type="entry name" value="METHYLENETETRAHYDROFOLATE--TRNA-(URACIL-5-)-METHYLTRANSFERASE TRMFO"/>
    <property type="match status" value="1"/>
</dbReference>
<dbReference type="Pfam" id="PF01134">
    <property type="entry name" value="GIDA"/>
    <property type="match status" value="1"/>
</dbReference>
<dbReference type="SUPFAM" id="SSF51905">
    <property type="entry name" value="FAD/NAD(P)-binding domain"/>
    <property type="match status" value="1"/>
</dbReference>
<proteinExistence type="inferred from homology"/>
<comment type="function">
    <text evidence="1">Catalyzes the folate-dependent formation of 5-methyl-uridine at position 54 (M-5-U54) in all tRNAs.</text>
</comment>
<comment type="catalytic activity">
    <reaction evidence="1">
        <text>uridine(54) in tRNA + (6R)-5,10-methylene-5,6,7,8-tetrahydrofolate + NADH + H(+) = 5-methyluridine(54) in tRNA + (6S)-5,6,7,8-tetrahydrofolate + NAD(+)</text>
        <dbReference type="Rhea" id="RHEA:16873"/>
        <dbReference type="Rhea" id="RHEA-COMP:10167"/>
        <dbReference type="Rhea" id="RHEA-COMP:10193"/>
        <dbReference type="ChEBI" id="CHEBI:15378"/>
        <dbReference type="ChEBI" id="CHEBI:15636"/>
        <dbReference type="ChEBI" id="CHEBI:57453"/>
        <dbReference type="ChEBI" id="CHEBI:57540"/>
        <dbReference type="ChEBI" id="CHEBI:57945"/>
        <dbReference type="ChEBI" id="CHEBI:65315"/>
        <dbReference type="ChEBI" id="CHEBI:74447"/>
        <dbReference type="EC" id="2.1.1.74"/>
    </reaction>
</comment>
<comment type="catalytic activity">
    <reaction evidence="1">
        <text>uridine(54) in tRNA + (6R)-5,10-methylene-5,6,7,8-tetrahydrofolate + NADPH + H(+) = 5-methyluridine(54) in tRNA + (6S)-5,6,7,8-tetrahydrofolate + NADP(+)</text>
        <dbReference type="Rhea" id="RHEA:62372"/>
        <dbReference type="Rhea" id="RHEA-COMP:10167"/>
        <dbReference type="Rhea" id="RHEA-COMP:10193"/>
        <dbReference type="ChEBI" id="CHEBI:15378"/>
        <dbReference type="ChEBI" id="CHEBI:15636"/>
        <dbReference type="ChEBI" id="CHEBI:57453"/>
        <dbReference type="ChEBI" id="CHEBI:57783"/>
        <dbReference type="ChEBI" id="CHEBI:58349"/>
        <dbReference type="ChEBI" id="CHEBI:65315"/>
        <dbReference type="ChEBI" id="CHEBI:74447"/>
        <dbReference type="EC" id="2.1.1.74"/>
    </reaction>
</comment>
<comment type="cofactor">
    <cofactor evidence="1">
        <name>FAD</name>
        <dbReference type="ChEBI" id="CHEBI:57692"/>
    </cofactor>
</comment>
<comment type="subcellular location">
    <subcellularLocation>
        <location evidence="1">Cytoplasm</location>
    </subcellularLocation>
</comment>
<comment type="similarity">
    <text evidence="1">Belongs to the MnmG family. TrmFO subfamily.</text>
</comment>
<protein>
    <recommendedName>
        <fullName evidence="1">Methylenetetrahydrofolate--tRNA-(uracil-5-)-methyltransferase TrmFO</fullName>
        <ecNumber evidence="1">2.1.1.74</ecNumber>
    </recommendedName>
    <alternativeName>
        <fullName evidence="1">Folate-dependent tRNA (uracil-5-)-methyltransferase</fullName>
    </alternativeName>
    <alternativeName>
        <fullName evidence="1">Folate-dependent tRNA(M-5-U54)-methyltransferase</fullName>
    </alternativeName>
</protein>
<gene>
    <name evidence="1" type="primary">trmFO</name>
    <name type="ordered locus">Mmc1_3484</name>
</gene>